<sequence>MQKWVCVPCGYEYDPADGDPENGIEPGTAFEDLPEDWVCPVCGVDKSFFEPVS</sequence>
<proteinExistence type="evidence at protein level"/>
<comment type="function">
    <text>Functions as an electron acceptor for pyruvate ferredoxin oxidoreductase (PFOR).</text>
</comment>
<comment type="cofactor">
    <cofactor evidence="1">
        <name>Fe(3+)</name>
        <dbReference type="ChEBI" id="CHEBI:29034"/>
    </cofactor>
    <text evidence="1">Binds 1 Fe(3+) ion per subunit.</text>
</comment>
<comment type="biophysicochemical properties">
    <redoxPotential>
        <text>E(0) is -87 mV.</text>
    </redoxPotential>
</comment>
<comment type="subunit">
    <text>Monomer.</text>
</comment>
<comment type="similarity">
    <text evidence="3">Belongs to the rubredoxin family.</text>
</comment>
<reference key="1">
    <citation type="journal article" date="2002" name="Proc. Natl. Acad. Sci. U.S.A.">
        <title>The complete genome sequence of Chlorobium tepidum TLS, a photosynthetic, anaerobic, green-sulfur bacterium.</title>
        <authorList>
            <person name="Eisen J.A."/>
            <person name="Nelson K.E."/>
            <person name="Paulsen I.T."/>
            <person name="Heidelberg J.F."/>
            <person name="Wu M."/>
            <person name="Dodson R.J."/>
            <person name="DeBoy R.T."/>
            <person name="Gwinn M.L."/>
            <person name="Nelson W.C."/>
            <person name="Haft D.H."/>
            <person name="Hickey E.K."/>
            <person name="Peterson J.D."/>
            <person name="Durkin A.S."/>
            <person name="Kolonay J.F."/>
            <person name="Yang F."/>
            <person name="Holt I.E."/>
            <person name="Umayam L.A."/>
            <person name="Mason T.M."/>
            <person name="Brenner M."/>
            <person name="Shea T.P."/>
            <person name="Parksey D.S."/>
            <person name="Nierman W.C."/>
            <person name="Feldblyum T.V."/>
            <person name="Hansen C.L."/>
            <person name="Craven M.B."/>
            <person name="Radune D."/>
            <person name="Vamathevan J.J."/>
            <person name="Khouri H.M."/>
            <person name="White O."/>
            <person name="Gruber T.M."/>
            <person name="Ketchum K.A."/>
            <person name="Venter J.C."/>
            <person name="Tettelin H."/>
            <person name="Bryant D.A."/>
            <person name="Fraser C.M."/>
        </authorList>
    </citation>
    <scope>NUCLEOTIDE SEQUENCE [LARGE SCALE GENOMIC DNA]</scope>
    <source>
        <strain>ATCC 49652 / DSM 12025 / NBRC 103806 / TLS</strain>
    </source>
</reference>
<reference key="2">
    <citation type="journal article" date="1999" name="J. Biol. Chem.">
        <title>Rubredoxin from the green sulfur bacterium Chlorobium tepidum functions as an electron acceptor for pyruvate ferredoxin oxidoreductase.</title>
        <authorList>
            <person name="Yoon K.-S."/>
            <person name="Hille R."/>
            <person name="Hemann C."/>
            <person name="Tabita F.R."/>
        </authorList>
    </citation>
    <scope>PROTEIN SEQUENCE OF 1-17</scope>
    <scope>CHARACTERIZATION</scope>
</reference>
<evidence type="ECO:0000250" key="1"/>
<evidence type="ECO:0000255" key="2">
    <source>
        <dbReference type="PROSITE-ProRule" id="PRU00241"/>
    </source>
</evidence>
<evidence type="ECO:0000305" key="3"/>
<accession>P58025</accession>
<organism>
    <name type="scientific">Chlorobaculum tepidum (strain ATCC 49652 / DSM 12025 / NBRC 103806 / TLS)</name>
    <name type="common">Chlorobium tepidum</name>
    <dbReference type="NCBI Taxonomy" id="194439"/>
    <lineage>
        <taxon>Bacteria</taxon>
        <taxon>Pseudomonadati</taxon>
        <taxon>Chlorobiota</taxon>
        <taxon>Chlorobiia</taxon>
        <taxon>Chlorobiales</taxon>
        <taxon>Chlorobiaceae</taxon>
        <taxon>Chlorobaculum</taxon>
    </lineage>
</organism>
<gene>
    <name type="primary">rub3</name>
    <name type="synonym">rbr-3</name>
    <name type="synonym">rub</name>
    <name type="ordered locus">CT2024</name>
</gene>
<feature type="chain" id="PRO_0000135028" description="Rubredoxin 3">
    <location>
        <begin position="1"/>
        <end position="53"/>
    </location>
</feature>
<feature type="domain" description="Rubredoxin-like" evidence="2">
    <location>
        <begin position="1"/>
        <end position="53"/>
    </location>
</feature>
<feature type="binding site" evidence="2">
    <location>
        <position position="6"/>
    </location>
    <ligand>
        <name>Fe cation</name>
        <dbReference type="ChEBI" id="CHEBI:24875"/>
    </ligand>
</feature>
<feature type="binding site" evidence="2">
    <location>
        <position position="9"/>
    </location>
    <ligand>
        <name>Fe cation</name>
        <dbReference type="ChEBI" id="CHEBI:24875"/>
    </ligand>
</feature>
<feature type="binding site" evidence="2">
    <location>
        <position position="39"/>
    </location>
    <ligand>
        <name>Fe cation</name>
        <dbReference type="ChEBI" id="CHEBI:24875"/>
    </ligand>
</feature>
<feature type="binding site" evidence="2">
    <location>
        <position position="42"/>
    </location>
    <ligand>
        <name>Fe cation</name>
        <dbReference type="ChEBI" id="CHEBI:24875"/>
    </ligand>
</feature>
<dbReference type="EMBL" id="AE006470">
    <property type="protein sequence ID" value="AAM73241.1"/>
    <property type="molecule type" value="Genomic_DNA"/>
</dbReference>
<dbReference type="RefSeq" id="NP_662899.1">
    <property type="nucleotide sequence ID" value="NC_002932.3"/>
</dbReference>
<dbReference type="SMR" id="P58025"/>
<dbReference type="STRING" id="194439.CT2024"/>
<dbReference type="EnsemblBacteria" id="AAM73241">
    <property type="protein sequence ID" value="AAM73241"/>
    <property type="gene ID" value="CT2024"/>
</dbReference>
<dbReference type="KEGG" id="cte:CT2024"/>
<dbReference type="PATRIC" id="fig|194439.7.peg.1834"/>
<dbReference type="eggNOG" id="COG1773">
    <property type="taxonomic scope" value="Bacteria"/>
</dbReference>
<dbReference type="HOGENOM" id="CLU_128747_3_3_10"/>
<dbReference type="OrthoDB" id="9758182at2"/>
<dbReference type="Proteomes" id="UP000001007">
    <property type="component" value="Chromosome"/>
</dbReference>
<dbReference type="GO" id="GO:0009055">
    <property type="term" value="F:electron transfer activity"/>
    <property type="evidence" value="ECO:0007669"/>
    <property type="project" value="InterPro"/>
</dbReference>
<dbReference type="GO" id="GO:0005506">
    <property type="term" value="F:iron ion binding"/>
    <property type="evidence" value="ECO:0007669"/>
    <property type="project" value="InterPro"/>
</dbReference>
<dbReference type="GO" id="GO:0043448">
    <property type="term" value="P:alkane catabolic process"/>
    <property type="evidence" value="ECO:0007669"/>
    <property type="project" value="TreeGrafter"/>
</dbReference>
<dbReference type="CDD" id="cd00730">
    <property type="entry name" value="rubredoxin"/>
    <property type="match status" value="1"/>
</dbReference>
<dbReference type="FunFam" id="2.20.28.10:FF:000001">
    <property type="entry name" value="Rubredoxin"/>
    <property type="match status" value="1"/>
</dbReference>
<dbReference type="Gene3D" id="2.20.28.10">
    <property type="match status" value="1"/>
</dbReference>
<dbReference type="InterPro" id="IPR024922">
    <property type="entry name" value="Rubredoxin"/>
</dbReference>
<dbReference type="InterPro" id="IPR024934">
    <property type="entry name" value="Rubredoxin-like_dom"/>
</dbReference>
<dbReference type="InterPro" id="IPR024935">
    <property type="entry name" value="Rubredoxin_dom"/>
</dbReference>
<dbReference type="InterPro" id="IPR050526">
    <property type="entry name" value="Rubredoxin_ET"/>
</dbReference>
<dbReference type="InterPro" id="IPR018527">
    <property type="entry name" value="Rubredoxin_Fe_BS"/>
</dbReference>
<dbReference type="NCBIfam" id="NF045768">
    <property type="entry name" value="RubredRD"/>
    <property type="match status" value="1"/>
</dbReference>
<dbReference type="PANTHER" id="PTHR47627">
    <property type="entry name" value="RUBREDOXIN"/>
    <property type="match status" value="1"/>
</dbReference>
<dbReference type="PANTHER" id="PTHR47627:SF1">
    <property type="entry name" value="RUBREDOXIN-1-RELATED"/>
    <property type="match status" value="1"/>
</dbReference>
<dbReference type="Pfam" id="PF00301">
    <property type="entry name" value="Rubredoxin"/>
    <property type="match status" value="1"/>
</dbReference>
<dbReference type="PIRSF" id="PIRSF000071">
    <property type="entry name" value="Rubredoxin"/>
    <property type="match status" value="1"/>
</dbReference>
<dbReference type="PRINTS" id="PR00163">
    <property type="entry name" value="RUBREDOXIN"/>
</dbReference>
<dbReference type="SUPFAM" id="SSF57802">
    <property type="entry name" value="Rubredoxin-like"/>
    <property type="match status" value="1"/>
</dbReference>
<dbReference type="PROSITE" id="PS00202">
    <property type="entry name" value="RUBREDOXIN"/>
    <property type="match status" value="1"/>
</dbReference>
<dbReference type="PROSITE" id="PS50903">
    <property type="entry name" value="RUBREDOXIN_LIKE"/>
    <property type="match status" value="1"/>
</dbReference>
<name>RUBR3_CHLTE</name>
<keyword id="KW-0903">Direct protein sequencing</keyword>
<keyword id="KW-0249">Electron transport</keyword>
<keyword id="KW-0408">Iron</keyword>
<keyword id="KW-0479">Metal-binding</keyword>
<keyword id="KW-1185">Reference proteome</keyword>
<keyword id="KW-0813">Transport</keyword>
<protein>
    <recommendedName>
        <fullName>Rubredoxin 3</fullName>
        <shortName>Rd 3</shortName>
    </recommendedName>
</protein>